<proteinExistence type="evidence at transcript level"/>
<name>ARR24_ARATH</name>
<accession>F4JZT3</accession>
<evidence type="ECO:0000250" key="1">
    <source>
        <dbReference type="UniProtKB" id="Q9M8Y4"/>
    </source>
</evidence>
<evidence type="ECO:0000255" key="2">
    <source>
        <dbReference type="PROSITE-ProRule" id="PRU00169"/>
    </source>
</evidence>
<evidence type="ECO:0000269" key="3">
    <source>
    </source>
</evidence>
<evidence type="ECO:0000303" key="4">
    <source>
    </source>
</evidence>
<evidence type="ECO:0000305" key="5"/>
<evidence type="ECO:0000312" key="6">
    <source>
        <dbReference type="Araport" id="AT5G26594"/>
    </source>
</evidence>
<evidence type="ECO:0000312" key="7">
    <source>
        <dbReference type="EMBL" id="AED93557.1"/>
    </source>
</evidence>
<dbReference type="EMBL" id="AC137518">
    <property type="status" value="NOT_ANNOTATED_CDS"/>
    <property type="molecule type" value="Genomic_DNA"/>
</dbReference>
<dbReference type="EMBL" id="CP002688">
    <property type="protein sequence ID" value="AED93557.1"/>
    <property type="molecule type" value="Genomic_DNA"/>
</dbReference>
<dbReference type="RefSeq" id="NP_850864.1">
    <property type="nucleotide sequence ID" value="NM_180533.1"/>
</dbReference>
<dbReference type="SMR" id="F4JZT3"/>
<dbReference type="FunCoup" id="F4JZT3">
    <property type="interactions" value="50"/>
</dbReference>
<dbReference type="STRING" id="3702.F4JZT3"/>
<dbReference type="PaxDb" id="3702-AT5G26594.1"/>
<dbReference type="EnsemblPlants" id="AT5G26594.1">
    <property type="protein sequence ID" value="AT5G26594.1"/>
    <property type="gene ID" value="AT5G26594"/>
</dbReference>
<dbReference type="GeneID" id="832707"/>
<dbReference type="Gramene" id="AT5G26594.1">
    <property type="protein sequence ID" value="AT5G26594.1"/>
    <property type="gene ID" value="AT5G26594"/>
</dbReference>
<dbReference type="KEGG" id="ath:AT5G26594"/>
<dbReference type="Araport" id="AT5G26594"/>
<dbReference type="TAIR" id="AT5G26594">
    <property type="gene designation" value="RR24"/>
</dbReference>
<dbReference type="eggNOG" id="KOG0519">
    <property type="taxonomic scope" value="Eukaryota"/>
</dbReference>
<dbReference type="HOGENOM" id="CLU_000445_69_12_1"/>
<dbReference type="InParanoid" id="F4JZT3"/>
<dbReference type="OMA" id="MDGMECV"/>
<dbReference type="PhylomeDB" id="F4JZT3"/>
<dbReference type="PRO" id="PR:F4JZT3"/>
<dbReference type="Proteomes" id="UP000006548">
    <property type="component" value="Chromosome 5"/>
</dbReference>
<dbReference type="ExpressionAtlas" id="F4JZT3">
    <property type="expression patterns" value="baseline"/>
</dbReference>
<dbReference type="GO" id="GO:0005634">
    <property type="term" value="C:nucleus"/>
    <property type="evidence" value="ECO:0007669"/>
    <property type="project" value="UniProtKB-SubCell"/>
</dbReference>
<dbReference type="GO" id="GO:0009736">
    <property type="term" value="P:cytokinin-activated signaling pathway"/>
    <property type="evidence" value="ECO:0007669"/>
    <property type="project" value="UniProtKB-KW"/>
</dbReference>
<dbReference type="GO" id="GO:0000160">
    <property type="term" value="P:phosphorelay signal transduction system"/>
    <property type="evidence" value="ECO:0007669"/>
    <property type="project" value="UniProtKB-KW"/>
</dbReference>
<dbReference type="CDD" id="cd17546">
    <property type="entry name" value="REC_hyHK_CKI1_RcsC-like"/>
    <property type="match status" value="1"/>
</dbReference>
<dbReference type="Gene3D" id="3.40.50.2300">
    <property type="match status" value="1"/>
</dbReference>
<dbReference type="InterPro" id="IPR011006">
    <property type="entry name" value="CheY-like_superfamily"/>
</dbReference>
<dbReference type="InterPro" id="IPR001789">
    <property type="entry name" value="Sig_transdc_resp-reg_receiver"/>
</dbReference>
<dbReference type="InterPro" id="IPR052048">
    <property type="entry name" value="ST_Response_Regulator"/>
</dbReference>
<dbReference type="PANTHER" id="PTHR43228">
    <property type="entry name" value="TWO-COMPONENT RESPONSE REGULATOR"/>
    <property type="match status" value="1"/>
</dbReference>
<dbReference type="PANTHER" id="PTHR43228:SF12">
    <property type="entry name" value="TWO-COMPONENT RESPONSE REGULATOR 24"/>
    <property type="match status" value="1"/>
</dbReference>
<dbReference type="Pfam" id="PF00072">
    <property type="entry name" value="Response_reg"/>
    <property type="match status" value="1"/>
</dbReference>
<dbReference type="SMART" id="SM00448">
    <property type="entry name" value="REC"/>
    <property type="match status" value="1"/>
</dbReference>
<dbReference type="SUPFAM" id="SSF52172">
    <property type="entry name" value="CheY-like"/>
    <property type="match status" value="1"/>
</dbReference>
<dbReference type="PROSITE" id="PS50110">
    <property type="entry name" value="RESPONSE_REGULATORY"/>
    <property type="match status" value="1"/>
</dbReference>
<organism>
    <name type="scientific">Arabidopsis thaliana</name>
    <name type="common">Mouse-ear cress</name>
    <dbReference type="NCBI Taxonomy" id="3702"/>
    <lineage>
        <taxon>Eukaryota</taxon>
        <taxon>Viridiplantae</taxon>
        <taxon>Streptophyta</taxon>
        <taxon>Embryophyta</taxon>
        <taxon>Tracheophyta</taxon>
        <taxon>Spermatophyta</taxon>
        <taxon>Magnoliopsida</taxon>
        <taxon>eudicotyledons</taxon>
        <taxon>Gunneridae</taxon>
        <taxon>Pentapetalae</taxon>
        <taxon>rosids</taxon>
        <taxon>malvids</taxon>
        <taxon>Brassicales</taxon>
        <taxon>Brassicaceae</taxon>
        <taxon>Camelineae</taxon>
        <taxon>Arabidopsis</taxon>
    </lineage>
</organism>
<reference key="1">
    <citation type="journal article" date="2000" name="Nature">
        <title>Sequence and analysis of chromosome 5 of the plant Arabidopsis thaliana.</title>
        <authorList>
            <person name="Tabata S."/>
            <person name="Kaneko T."/>
            <person name="Nakamura Y."/>
            <person name="Kotani H."/>
            <person name="Kato T."/>
            <person name="Asamizu E."/>
            <person name="Miyajima N."/>
            <person name="Sasamoto S."/>
            <person name="Kimura T."/>
            <person name="Hosouchi T."/>
            <person name="Kawashima K."/>
            <person name="Kohara M."/>
            <person name="Matsumoto M."/>
            <person name="Matsuno A."/>
            <person name="Muraki A."/>
            <person name="Nakayama S."/>
            <person name="Nakazaki N."/>
            <person name="Naruo K."/>
            <person name="Okumura S."/>
            <person name="Shinpo S."/>
            <person name="Takeuchi C."/>
            <person name="Wada T."/>
            <person name="Watanabe A."/>
            <person name="Yamada M."/>
            <person name="Yasuda M."/>
            <person name="Sato S."/>
            <person name="de la Bastide M."/>
            <person name="Huang E."/>
            <person name="Spiegel L."/>
            <person name="Gnoj L."/>
            <person name="O'Shaughnessy A."/>
            <person name="Preston R."/>
            <person name="Habermann K."/>
            <person name="Murray J."/>
            <person name="Johnson D."/>
            <person name="Rohlfing T."/>
            <person name="Nelson J."/>
            <person name="Stoneking T."/>
            <person name="Pepin K."/>
            <person name="Spieth J."/>
            <person name="Sekhon M."/>
            <person name="Armstrong J."/>
            <person name="Becker M."/>
            <person name="Belter E."/>
            <person name="Cordum H."/>
            <person name="Cordes M."/>
            <person name="Courtney L."/>
            <person name="Courtney W."/>
            <person name="Dante M."/>
            <person name="Du H."/>
            <person name="Edwards J."/>
            <person name="Fryman J."/>
            <person name="Haakensen B."/>
            <person name="Lamar E."/>
            <person name="Latreille P."/>
            <person name="Leonard S."/>
            <person name="Meyer R."/>
            <person name="Mulvaney E."/>
            <person name="Ozersky P."/>
            <person name="Riley A."/>
            <person name="Strowmatt C."/>
            <person name="Wagner-McPherson C."/>
            <person name="Wollam A."/>
            <person name="Yoakum M."/>
            <person name="Bell M."/>
            <person name="Dedhia N."/>
            <person name="Parnell L."/>
            <person name="Shah R."/>
            <person name="Rodriguez M."/>
            <person name="Hoon See L."/>
            <person name="Vil D."/>
            <person name="Baker J."/>
            <person name="Kirchoff K."/>
            <person name="Toth K."/>
            <person name="King L."/>
            <person name="Bahret A."/>
            <person name="Miller B."/>
            <person name="Marra M.A."/>
            <person name="Martienssen R."/>
            <person name="McCombie W.R."/>
            <person name="Wilson R.K."/>
            <person name="Murphy G."/>
            <person name="Bancroft I."/>
            <person name="Volckaert G."/>
            <person name="Wambutt R."/>
            <person name="Duesterhoeft A."/>
            <person name="Stiekema W."/>
            <person name="Pohl T."/>
            <person name="Entian K.-D."/>
            <person name="Terryn N."/>
            <person name="Hartley N."/>
            <person name="Bent E."/>
            <person name="Johnson S."/>
            <person name="Langham S.-A."/>
            <person name="McCullagh B."/>
            <person name="Robben J."/>
            <person name="Grymonprez B."/>
            <person name="Zimmermann W."/>
            <person name="Ramsperger U."/>
            <person name="Wedler H."/>
            <person name="Balke K."/>
            <person name="Wedler E."/>
            <person name="Peters S."/>
            <person name="van Staveren M."/>
            <person name="Dirkse W."/>
            <person name="Mooijman P."/>
            <person name="Klein Lankhorst R."/>
            <person name="Weitzenegger T."/>
            <person name="Bothe G."/>
            <person name="Rose M."/>
            <person name="Hauf J."/>
            <person name="Berneiser S."/>
            <person name="Hempel S."/>
            <person name="Feldpausch M."/>
            <person name="Lamberth S."/>
            <person name="Villarroel R."/>
            <person name="Gielen J."/>
            <person name="Ardiles W."/>
            <person name="Bents O."/>
            <person name="Lemcke K."/>
            <person name="Kolesov G."/>
            <person name="Mayer K.F.X."/>
            <person name="Rudd S."/>
            <person name="Schoof H."/>
            <person name="Schueller C."/>
            <person name="Zaccaria P."/>
            <person name="Mewes H.-W."/>
            <person name="Bevan M."/>
            <person name="Fransz P.F."/>
        </authorList>
    </citation>
    <scope>NUCLEOTIDE SEQUENCE [LARGE SCALE GENOMIC DNA]</scope>
    <source>
        <strain>cv. Columbia</strain>
    </source>
</reference>
<reference key="2">
    <citation type="journal article" date="2017" name="Plant J.">
        <title>Araport11: a complete reannotation of the Arabidopsis thaliana reference genome.</title>
        <authorList>
            <person name="Cheng C.Y."/>
            <person name="Krishnakumar V."/>
            <person name="Chan A.P."/>
            <person name="Thibaud-Nissen F."/>
            <person name="Schobel S."/>
            <person name="Town C.D."/>
        </authorList>
    </citation>
    <scope>GENOME REANNOTATION</scope>
    <source>
        <strain>cv. Columbia</strain>
    </source>
</reference>
<reference key="3">
    <citation type="journal article" date="2004" name="Plant Cell Physiol.">
        <title>Arabidopsis response regulator, ARR22, ectopic expression of which results in phenotypes similar to the wol cytokinin-receptor mutant.</title>
        <authorList>
            <person name="Kiba T."/>
            <person name="Aoki K."/>
            <person name="Sakakibara H."/>
            <person name="Mizuno T."/>
        </authorList>
    </citation>
    <scope>NUCLEOTIDE SEQUENCE [MRNA] OF 18-130</scope>
    <scope>GENE FAMILY</scope>
    <scope>NOMENCLATURE</scope>
    <source>
        <strain>cv. Columbia</strain>
    </source>
</reference>
<reference key="4">
    <citation type="journal article" date="2006" name="J. Exp. Bot.">
        <title>Spatial and temporal expression of the response regulators ARR22 and ARR24 in Arabidopsis thaliana.</title>
        <authorList>
            <person name="Gattolin S."/>
            <person name="Alandete-Saez M."/>
            <person name="Elliott K."/>
            <person name="Gonzalez-Carranza Z."/>
            <person name="Naomab E."/>
            <person name="Powell C."/>
            <person name="Roberts J.A."/>
        </authorList>
    </citation>
    <scope>DISRUPTION PHENOTYPE</scope>
    <scope>TISSUE SPECIFICITY</scope>
    <scope>DEVELOPMENTAL STAGE</scope>
    <source>
        <strain>cv. Columbia</strain>
        <strain>cv. Wassilewskija</strain>
    </source>
</reference>
<comment type="function">
    <text evidence="1">Functions as a response regulator involved in His-to-Asp phosphorelay signal transduction system. Phosphorylation of the Asp residue in the receiver domain activates the ability of the protein to promote the transcription of target genes. Type-A response regulators seem to act as negative regulators of the cytokinin signaling.</text>
</comment>
<comment type="subcellular location">
    <subcellularLocation>
        <location evidence="1">Nucleus</location>
    </subcellularLocation>
</comment>
<comment type="tissue specificity">
    <text evidence="3">Mostly expressed in flowers and siliques, primarily restricted to pollen grains.</text>
</comment>
<comment type="developmental stage">
    <text evidence="3">In flowers, levels are reaching a maximum in buds and open flowers before declining during pod development and maturation. Strongly expressed in pollen grains within the anthers of young and mature flowers. Occasionally present in the testa of developing seeds.</text>
</comment>
<comment type="PTM">
    <text evidence="1">Two-component system major event consists of a His-to-Asp phosphorelay between a sensor histidine kinase (HK) and a response regulator (RR). In plants, the His-to-Asp phosphorelay involves an additional intermediate named Histidine-containing phosphotransfer protein (HPt). This multistep phosphorelay consists of a His-Asp-His-Asp sequential transfer of a phosphate group between first a His and an Asp of the HK protein, followed by the transfer to a conserved His of the HPt protein and finally the transfer to an Asp in the receiver domain of the RR protein.</text>
</comment>
<comment type="disruption phenotype">
    <text evidence="3">No visible phenotype.</text>
</comment>
<comment type="similarity">
    <text evidence="5">Belongs to the ARR family. Type-A subfamily.</text>
</comment>
<keyword id="KW-0932">Cytokinin signaling pathway</keyword>
<keyword id="KW-0539">Nucleus</keyword>
<keyword id="KW-0597">Phosphoprotein</keyword>
<keyword id="KW-1185">Reference proteome</keyword>
<keyword id="KW-0804">Transcription</keyword>
<keyword id="KW-0805">Transcription regulation</keyword>
<keyword id="KW-0902">Two-component regulatory system</keyword>
<feature type="chain" id="PRO_0000443959" description="Two-component response regulator 24">
    <location>
        <begin position="1"/>
        <end position="139"/>
    </location>
</feature>
<feature type="domain" description="Response regulatory" evidence="2">
    <location>
        <begin position="19"/>
        <end position="134"/>
    </location>
</feature>
<feature type="modified residue" description="4-aspartylphosphate" evidence="2">
    <location>
        <position position="69"/>
    </location>
</feature>
<gene>
    <name evidence="4" type="primary">ARR24</name>
    <name evidence="6" type="ordered locus">At5g26594</name>
    <name evidence="5" type="ORF">T7I7</name>
</gene>
<protein>
    <recommendedName>
        <fullName evidence="7">Two-component response regulator 24</fullName>
    </recommendedName>
    <alternativeName>
        <fullName evidence="4">Arabidopsis response regulator 24</fullName>
    </alternativeName>
</protein>
<sequence length="139" mass="15575">MTRDQVAEELPNLAESKLTALVVDDSFVNQTIHQKLLNRLGIKNDVVTNGKEAVDVYCSGGNYDLILMDMDMPIMNGIQATKRLREMGIESKIAGVTTRANEGEKKEFMEAGLNDFQEKPLTISKLLSILHKLNFYVQT</sequence>